<sequence>MAKTATKVRKKIKKNVAEGIAHVHASFNNTIITITDRQGNALSWATSGGAGFKGSRKSTPFAAQVAAEAAGKVAQECGVKNLEVRIKGPGPGRESAVRALNALGMKISSITDITPIPHNGCRPPKKRRI</sequence>
<gene>
    <name evidence="1" type="primary">rpsK</name>
    <name type="ordered locus">azo3393</name>
</gene>
<dbReference type="EMBL" id="AM406670">
    <property type="protein sequence ID" value="CAL96009.1"/>
    <property type="molecule type" value="Genomic_DNA"/>
</dbReference>
<dbReference type="RefSeq" id="WP_011767116.1">
    <property type="nucleotide sequence ID" value="NC_008702.1"/>
</dbReference>
<dbReference type="SMR" id="A1KB03"/>
<dbReference type="STRING" id="62928.azo3393"/>
<dbReference type="KEGG" id="aoa:dqs_3532"/>
<dbReference type="KEGG" id="azo:azo3393"/>
<dbReference type="eggNOG" id="COG0100">
    <property type="taxonomic scope" value="Bacteria"/>
</dbReference>
<dbReference type="HOGENOM" id="CLU_072439_5_0_4"/>
<dbReference type="OrthoDB" id="9806415at2"/>
<dbReference type="Proteomes" id="UP000002588">
    <property type="component" value="Chromosome"/>
</dbReference>
<dbReference type="GO" id="GO:1990904">
    <property type="term" value="C:ribonucleoprotein complex"/>
    <property type="evidence" value="ECO:0007669"/>
    <property type="project" value="UniProtKB-KW"/>
</dbReference>
<dbReference type="GO" id="GO:0005840">
    <property type="term" value="C:ribosome"/>
    <property type="evidence" value="ECO:0007669"/>
    <property type="project" value="UniProtKB-KW"/>
</dbReference>
<dbReference type="GO" id="GO:0019843">
    <property type="term" value="F:rRNA binding"/>
    <property type="evidence" value="ECO:0007669"/>
    <property type="project" value="UniProtKB-UniRule"/>
</dbReference>
<dbReference type="GO" id="GO:0003735">
    <property type="term" value="F:structural constituent of ribosome"/>
    <property type="evidence" value="ECO:0007669"/>
    <property type="project" value="InterPro"/>
</dbReference>
<dbReference type="GO" id="GO:0006412">
    <property type="term" value="P:translation"/>
    <property type="evidence" value="ECO:0007669"/>
    <property type="project" value="UniProtKB-UniRule"/>
</dbReference>
<dbReference type="FunFam" id="3.30.420.80:FF:000001">
    <property type="entry name" value="30S ribosomal protein S11"/>
    <property type="match status" value="1"/>
</dbReference>
<dbReference type="Gene3D" id="3.30.420.80">
    <property type="entry name" value="Ribosomal protein S11"/>
    <property type="match status" value="1"/>
</dbReference>
<dbReference type="HAMAP" id="MF_01310">
    <property type="entry name" value="Ribosomal_uS11"/>
    <property type="match status" value="1"/>
</dbReference>
<dbReference type="InterPro" id="IPR001971">
    <property type="entry name" value="Ribosomal_uS11"/>
</dbReference>
<dbReference type="InterPro" id="IPR019981">
    <property type="entry name" value="Ribosomal_uS11_bac-type"/>
</dbReference>
<dbReference type="InterPro" id="IPR018102">
    <property type="entry name" value="Ribosomal_uS11_CS"/>
</dbReference>
<dbReference type="InterPro" id="IPR036967">
    <property type="entry name" value="Ribosomal_uS11_sf"/>
</dbReference>
<dbReference type="NCBIfam" id="NF003698">
    <property type="entry name" value="PRK05309.1"/>
    <property type="match status" value="1"/>
</dbReference>
<dbReference type="NCBIfam" id="TIGR03632">
    <property type="entry name" value="uS11_bact"/>
    <property type="match status" value="1"/>
</dbReference>
<dbReference type="PANTHER" id="PTHR11759">
    <property type="entry name" value="40S RIBOSOMAL PROTEIN S14/30S RIBOSOMAL PROTEIN S11"/>
    <property type="match status" value="1"/>
</dbReference>
<dbReference type="Pfam" id="PF00411">
    <property type="entry name" value="Ribosomal_S11"/>
    <property type="match status" value="1"/>
</dbReference>
<dbReference type="PIRSF" id="PIRSF002131">
    <property type="entry name" value="Ribosomal_S11"/>
    <property type="match status" value="1"/>
</dbReference>
<dbReference type="SUPFAM" id="SSF53137">
    <property type="entry name" value="Translational machinery components"/>
    <property type="match status" value="1"/>
</dbReference>
<dbReference type="PROSITE" id="PS00054">
    <property type="entry name" value="RIBOSOMAL_S11"/>
    <property type="match status" value="1"/>
</dbReference>
<protein>
    <recommendedName>
        <fullName evidence="1">Small ribosomal subunit protein uS11</fullName>
    </recommendedName>
    <alternativeName>
        <fullName evidence="2">30S ribosomal protein S11</fullName>
    </alternativeName>
</protein>
<proteinExistence type="inferred from homology"/>
<evidence type="ECO:0000255" key="1">
    <source>
        <dbReference type="HAMAP-Rule" id="MF_01310"/>
    </source>
</evidence>
<evidence type="ECO:0000305" key="2"/>
<accession>A1KB03</accession>
<name>RS11_AZOSB</name>
<organism>
    <name type="scientific">Azoarcus sp. (strain BH72)</name>
    <dbReference type="NCBI Taxonomy" id="418699"/>
    <lineage>
        <taxon>Bacteria</taxon>
        <taxon>Pseudomonadati</taxon>
        <taxon>Pseudomonadota</taxon>
        <taxon>Betaproteobacteria</taxon>
        <taxon>Rhodocyclales</taxon>
        <taxon>Zoogloeaceae</taxon>
        <taxon>Azoarcus</taxon>
    </lineage>
</organism>
<keyword id="KW-1185">Reference proteome</keyword>
<keyword id="KW-0687">Ribonucleoprotein</keyword>
<keyword id="KW-0689">Ribosomal protein</keyword>
<keyword id="KW-0694">RNA-binding</keyword>
<keyword id="KW-0699">rRNA-binding</keyword>
<comment type="function">
    <text evidence="1">Located on the platform of the 30S subunit, it bridges several disparate RNA helices of the 16S rRNA. Forms part of the Shine-Dalgarno cleft in the 70S ribosome.</text>
</comment>
<comment type="subunit">
    <text evidence="1">Part of the 30S ribosomal subunit. Interacts with proteins S7 and S18. Binds to IF-3.</text>
</comment>
<comment type="similarity">
    <text evidence="1">Belongs to the universal ribosomal protein uS11 family.</text>
</comment>
<feature type="chain" id="PRO_0000294717" description="Small ribosomal subunit protein uS11">
    <location>
        <begin position="1"/>
        <end position="129"/>
    </location>
</feature>
<reference key="1">
    <citation type="journal article" date="2006" name="Nat. Biotechnol.">
        <title>Complete genome of the mutualistic, N2-fixing grass endophyte Azoarcus sp. strain BH72.</title>
        <authorList>
            <person name="Krause A."/>
            <person name="Ramakumar A."/>
            <person name="Bartels D."/>
            <person name="Battistoni F."/>
            <person name="Bekel T."/>
            <person name="Boch J."/>
            <person name="Boehm M."/>
            <person name="Friedrich F."/>
            <person name="Hurek T."/>
            <person name="Krause L."/>
            <person name="Linke B."/>
            <person name="McHardy A.C."/>
            <person name="Sarkar A."/>
            <person name="Schneiker S."/>
            <person name="Syed A.A."/>
            <person name="Thauer R."/>
            <person name="Vorhoelter F.-J."/>
            <person name="Weidner S."/>
            <person name="Puehler A."/>
            <person name="Reinhold-Hurek B."/>
            <person name="Kaiser O."/>
            <person name="Goesmann A."/>
        </authorList>
    </citation>
    <scope>NUCLEOTIDE SEQUENCE [LARGE SCALE GENOMIC DNA]</scope>
    <source>
        <strain>BH72</strain>
    </source>
</reference>